<proteinExistence type="inferred from homology"/>
<reference key="1">
    <citation type="journal article" date="2002" name="Nucleic Acids Res.">
        <title>Genome sequence of Shigella flexneri 2a: insights into pathogenicity through comparison with genomes of Escherichia coli K12 and O157.</title>
        <authorList>
            <person name="Jin Q."/>
            <person name="Yuan Z."/>
            <person name="Xu J."/>
            <person name="Wang Y."/>
            <person name="Shen Y."/>
            <person name="Lu W."/>
            <person name="Wang J."/>
            <person name="Liu H."/>
            <person name="Yang J."/>
            <person name="Yang F."/>
            <person name="Zhang X."/>
            <person name="Zhang J."/>
            <person name="Yang G."/>
            <person name="Wu H."/>
            <person name="Qu D."/>
            <person name="Dong J."/>
            <person name="Sun L."/>
            <person name="Xue Y."/>
            <person name="Zhao A."/>
            <person name="Gao Y."/>
            <person name="Zhu J."/>
            <person name="Kan B."/>
            <person name="Ding K."/>
            <person name="Chen S."/>
            <person name="Cheng H."/>
            <person name="Yao Z."/>
            <person name="He B."/>
            <person name="Chen R."/>
            <person name="Ma D."/>
            <person name="Qiang B."/>
            <person name="Wen Y."/>
            <person name="Hou Y."/>
            <person name="Yu J."/>
        </authorList>
    </citation>
    <scope>NUCLEOTIDE SEQUENCE [LARGE SCALE GENOMIC DNA]</scope>
    <source>
        <strain>301 / Serotype 2a</strain>
    </source>
</reference>
<reference key="2">
    <citation type="journal article" date="2003" name="Infect. Immun.">
        <title>Complete genome sequence and comparative genomics of Shigella flexneri serotype 2a strain 2457T.</title>
        <authorList>
            <person name="Wei J."/>
            <person name="Goldberg M.B."/>
            <person name="Burland V."/>
            <person name="Venkatesan M.M."/>
            <person name="Deng W."/>
            <person name="Fournier G."/>
            <person name="Mayhew G.F."/>
            <person name="Plunkett G. III"/>
            <person name="Rose D.J."/>
            <person name="Darling A."/>
            <person name="Mau B."/>
            <person name="Perna N.T."/>
            <person name="Payne S.M."/>
            <person name="Runyen-Janecky L.J."/>
            <person name="Zhou S."/>
            <person name="Schwartz D.C."/>
            <person name="Blattner F.R."/>
        </authorList>
    </citation>
    <scope>NUCLEOTIDE SEQUENCE [LARGE SCALE GENOMIC DNA]</scope>
    <source>
        <strain>ATCC 700930 / 2457T / Serotype 2a</strain>
    </source>
</reference>
<dbReference type="EC" id="3.1.26.5" evidence="1"/>
<dbReference type="EMBL" id="AE005674">
    <property type="protein sequence ID" value="AAN45203.1"/>
    <property type="molecule type" value="Genomic_DNA"/>
</dbReference>
<dbReference type="EMBL" id="AE014073">
    <property type="protein sequence ID" value="AAP18994.1"/>
    <property type="molecule type" value="Genomic_DNA"/>
</dbReference>
<dbReference type="RefSeq" id="NP_709496.1">
    <property type="nucleotide sequence ID" value="NC_004337.2"/>
</dbReference>
<dbReference type="RefSeq" id="WP_000239730.1">
    <property type="nucleotide sequence ID" value="NZ_WPGW01000019.1"/>
</dbReference>
<dbReference type="SMR" id="P0A7Y9"/>
<dbReference type="STRING" id="198214.SF3760"/>
<dbReference type="PaxDb" id="198214-SF3760"/>
<dbReference type="GeneID" id="1026135"/>
<dbReference type="GeneID" id="93778446"/>
<dbReference type="KEGG" id="sfl:SF3760"/>
<dbReference type="KEGG" id="sfx:S4011"/>
<dbReference type="PATRIC" id="fig|198214.7.peg.4437"/>
<dbReference type="HOGENOM" id="CLU_117179_11_0_6"/>
<dbReference type="Proteomes" id="UP000001006">
    <property type="component" value="Chromosome"/>
</dbReference>
<dbReference type="Proteomes" id="UP000002673">
    <property type="component" value="Chromosome"/>
</dbReference>
<dbReference type="GO" id="GO:0030677">
    <property type="term" value="C:ribonuclease P complex"/>
    <property type="evidence" value="ECO:0007669"/>
    <property type="project" value="TreeGrafter"/>
</dbReference>
<dbReference type="GO" id="GO:0042781">
    <property type="term" value="F:3'-tRNA processing endoribonuclease activity"/>
    <property type="evidence" value="ECO:0007669"/>
    <property type="project" value="TreeGrafter"/>
</dbReference>
<dbReference type="GO" id="GO:0004526">
    <property type="term" value="F:ribonuclease P activity"/>
    <property type="evidence" value="ECO:0007669"/>
    <property type="project" value="UniProtKB-UniRule"/>
</dbReference>
<dbReference type="GO" id="GO:0000049">
    <property type="term" value="F:tRNA binding"/>
    <property type="evidence" value="ECO:0007669"/>
    <property type="project" value="UniProtKB-UniRule"/>
</dbReference>
<dbReference type="GO" id="GO:0001682">
    <property type="term" value="P:tRNA 5'-leader removal"/>
    <property type="evidence" value="ECO:0007669"/>
    <property type="project" value="UniProtKB-UniRule"/>
</dbReference>
<dbReference type="FunFam" id="3.30.230.10:FF:000016">
    <property type="entry name" value="Ribonuclease P protein component"/>
    <property type="match status" value="1"/>
</dbReference>
<dbReference type="Gene3D" id="3.30.230.10">
    <property type="match status" value="1"/>
</dbReference>
<dbReference type="HAMAP" id="MF_00227">
    <property type="entry name" value="RNase_P"/>
    <property type="match status" value="1"/>
</dbReference>
<dbReference type="InterPro" id="IPR020568">
    <property type="entry name" value="Ribosomal_Su5_D2-typ_SF"/>
</dbReference>
<dbReference type="InterPro" id="IPR014721">
    <property type="entry name" value="Ribsml_uS5_D2-typ_fold_subgr"/>
</dbReference>
<dbReference type="InterPro" id="IPR000100">
    <property type="entry name" value="RNase_P"/>
</dbReference>
<dbReference type="InterPro" id="IPR020539">
    <property type="entry name" value="RNase_P_CS"/>
</dbReference>
<dbReference type="NCBIfam" id="TIGR00188">
    <property type="entry name" value="rnpA"/>
    <property type="match status" value="1"/>
</dbReference>
<dbReference type="PANTHER" id="PTHR33992">
    <property type="entry name" value="RIBONUCLEASE P PROTEIN COMPONENT"/>
    <property type="match status" value="1"/>
</dbReference>
<dbReference type="PANTHER" id="PTHR33992:SF1">
    <property type="entry name" value="RIBONUCLEASE P PROTEIN COMPONENT"/>
    <property type="match status" value="1"/>
</dbReference>
<dbReference type="Pfam" id="PF00825">
    <property type="entry name" value="Ribonuclease_P"/>
    <property type="match status" value="1"/>
</dbReference>
<dbReference type="SUPFAM" id="SSF54211">
    <property type="entry name" value="Ribosomal protein S5 domain 2-like"/>
    <property type="match status" value="1"/>
</dbReference>
<dbReference type="PROSITE" id="PS00648">
    <property type="entry name" value="RIBONUCLEASE_P"/>
    <property type="match status" value="1"/>
</dbReference>
<protein>
    <recommendedName>
        <fullName evidence="1">Ribonuclease P protein component</fullName>
        <shortName evidence="1">RNase P protein</shortName>
        <shortName evidence="1">RNaseP protein</shortName>
        <ecNumber evidence="1">3.1.26.5</ecNumber>
    </recommendedName>
    <alternativeName>
        <fullName evidence="1">Protein C5</fullName>
    </alternativeName>
</protein>
<name>RNPA_SHIFL</name>
<organism>
    <name type="scientific">Shigella flexneri</name>
    <dbReference type="NCBI Taxonomy" id="623"/>
    <lineage>
        <taxon>Bacteria</taxon>
        <taxon>Pseudomonadati</taxon>
        <taxon>Pseudomonadota</taxon>
        <taxon>Gammaproteobacteria</taxon>
        <taxon>Enterobacterales</taxon>
        <taxon>Enterobacteriaceae</taxon>
        <taxon>Shigella</taxon>
    </lineage>
</organism>
<keyword id="KW-0255">Endonuclease</keyword>
<keyword id="KW-0378">Hydrolase</keyword>
<keyword id="KW-0540">Nuclease</keyword>
<keyword id="KW-1185">Reference proteome</keyword>
<keyword id="KW-0694">RNA-binding</keyword>
<keyword id="KW-0819">tRNA processing</keyword>
<feature type="chain" id="PRO_0000198523" description="Ribonuclease P protein component">
    <location>
        <begin position="1"/>
        <end position="119"/>
    </location>
</feature>
<evidence type="ECO:0000255" key="1">
    <source>
        <dbReference type="HAMAP-Rule" id="MF_00227"/>
    </source>
</evidence>
<accession>P0A7Y9</accession>
<accession>P06277</accession>
<comment type="function">
    <text evidence="1">RNaseP catalyzes the removal of the 5'-leader sequence from pre-tRNA to produce the mature 5'-terminus. It can also cleave other RNA substrates such as 4.5S RNA. The protein component plays an auxiliary but essential role in vivo by binding to the 5'-leader sequence and broadening the substrate specificity of the ribozyme.</text>
</comment>
<comment type="catalytic activity">
    <reaction evidence="1">
        <text>Endonucleolytic cleavage of RNA, removing 5'-extranucleotides from tRNA precursor.</text>
        <dbReference type="EC" id="3.1.26.5"/>
    </reaction>
</comment>
<comment type="subunit">
    <text evidence="1">Consists of a catalytic RNA component (M1 or rnpB) and a protein subunit.</text>
</comment>
<comment type="similarity">
    <text evidence="1">Belongs to the RnpA family.</text>
</comment>
<gene>
    <name evidence="1" type="primary">rnpA</name>
    <name type="ordered locus">SF3760</name>
    <name type="ordered locus">S4011</name>
</gene>
<sequence>MVKLAFPRELRLLTPSQFTFVFQQPQRAGTPQITILGRLNSLGHPRIGLTVAKKNVRRAHERNRIKRLTRESFRLRQHELPAMDFVVVAKKGVADLDNRALSEALEKLWRRHCRLARGS</sequence>